<keyword id="KW-0002">3D-structure</keyword>
<keyword id="KW-1185">Reference proteome</keyword>
<keyword id="KW-0687">Ribonucleoprotein</keyword>
<keyword id="KW-0689">Ribosomal protein</keyword>
<keyword id="KW-0694">RNA-binding</keyword>
<keyword id="KW-0699">rRNA-binding</keyword>
<organism>
    <name type="scientific">Mycoplasma pneumoniae (strain ATCC 29342 / M129 / Subtype 1)</name>
    <name type="common">Mycoplasmoides pneumoniae</name>
    <dbReference type="NCBI Taxonomy" id="272634"/>
    <lineage>
        <taxon>Bacteria</taxon>
        <taxon>Bacillati</taxon>
        <taxon>Mycoplasmatota</taxon>
        <taxon>Mycoplasmoidales</taxon>
        <taxon>Mycoplasmoidaceae</taxon>
        <taxon>Mycoplasmoides</taxon>
    </lineage>
</organism>
<comment type="function">
    <text evidence="1">One of two assembly initiator proteins, it binds directly to the 5'-end of the 23S rRNA, where it nucleates assembly of the 50S subunit.</text>
</comment>
<comment type="function">
    <text evidence="1">One of the proteins that surrounds the polypeptide exit tunnel on the outside of the subunit.</text>
</comment>
<comment type="subunit">
    <text evidence="1">Part of the 50S ribosomal subunit.</text>
</comment>
<comment type="similarity">
    <text evidence="1">Belongs to the universal ribosomal protein uL24 family.</text>
</comment>
<protein>
    <recommendedName>
        <fullName evidence="1">Large ribosomal subunit protein uL24</fullName>
    </recommendedName>
    <alternativeName>
        <fullName evidence="3">50S ribosomal protein L24</fullName>
    </alternativeName>
</protein>
<dbReference type="EMBL" id="U34795">
    <property type="protein sequence ID" value="AAC43705.1"/>
    <property type="molecule type" value="Genomic_DNA"/>
</dbReference>
<dbReference type="EMBL" id="U00089">
    <property type="protein sequence ID" value="AAB96303.1"/>
    <property type="molecule type" value="Genomic_DNA"/>
</dbReference>
<dbReference type="PIR" id="S62830">
    <property type="entry name" value="S62830"/>
</dbReference>
<dbReference type="RefSeq" id="NP_109864.1">
    <property type="nucleotide sequence ID" value="NC_000912.1"/>
</dbReference>
<dbReference type="RefSeq" id="WP_010874533.1">
    <property type="nucleotide sequence ID" value="NZ_OU342337.1"/>
</dbReference>
<dbReference type="PDB" id="7OOD">
    <property type="method" value="EM"/>
    <property type="resolution" value="3.40 A"/>
    <property type="chains" value="t=1-111"/>
</dbReference>
<dbReference type="PDB" id="7P6Z">
    <property type="method" value="EM"/>
    <property type="resolution" value="3.50 A"/>
    <property type="chains" value="t=1-111"/>
</dbReference>
<dbReference type="PDB" id="7PAH">
    <property type="method" value="EM"/>
    <property type="resolution" value="9.50 A"/>
    <property type="chains" value="t=1-111"/>
</dbReference>
<dbReference type="PDB" id="7PAI">
    <property type="method" value="EM"/>
    <property type="resolution" value="6.70 A"/>
    <property type="chains" value="t=1-111"/>
</dbReference>
<dbReference type="PDB" id="7PAJ">
    <property type="method" value="EM"/>
    <property type="resolution" value="7.30 A"/>
    <property type="chains" value="t=1-111"/>
</dbReference>
<dbReference type="PDB" id="7PAK">
    <property type="method" value="EM"/>
    <property type="resolution" value="5.30 A"/>
    <property type="chains" value="t=1-111"/>
</dbReference>
<dbReference type="PDB" id="7PAL">
    <property type="method" value="EM"/>
    <property type="resolution" value="4.70 A"/>
    <property type="chains" value="t=1-111"/>
</dbReference>
<dbReference type="PDB" id="7PAM">
    <property type="method" value="EM"/>
    <property type="resolution" value="6.80 A"/>
    <property type="chains" value="t=1-111"/>
</dbReference>
<dbReference type="PDB" id="7PAN">
    <property type="method" value="EM"/>
    <property type="resolution" value="9.70 A"/>
    <property type="chains" value="t=1-111"/>
</dbReference>
<dbReference type="PDB" id="7PAO">
    <property type="method" value="EM"/>
    <property type="resolution" value="7.00 A"/>
    <property type="chains" value="t=1-111"/>
</dbReference>
<dbReference type="PDB" id="7PAQ">
    <property type="method" value="EM"/>
    <property type="resolution" value="8.90 A"/>
    <property type="chains" value="t=1-111"/>
</dbReference>
<dbReference type="PDB" id="7PAR">
    <property type="method" value="EM"/>
    <property type="resolution" value="8.20 A"/>
    <property type="chains" value="t=1-111"/>
</dbReference>
<dbReference type="PDB" id="7PAS">
    <property type="method" value="EM"/>
    <property type="resolution" value="16.00 A"/>
    <property type="chains" value="t=1-111"/>
</dbReference>
<dbReference type="PDB" id="7PAT">
    <property type="method" value="EM"/>
    <property type="resolution" value="9.20 A"/>
    <property type="chains" value="t=1-111"/>
</dbReference>
<dbReference type="PDB" id="7PAU">
    <property type="method" value="EM"/>
    <property type="resolution" value="8.30 A"/>
    <property type="chains" value="t=1-111"/>
</dbReference>
<dbReference type="PDB" id="7PH9">
    <property type="method" value="EM"/>
    <property type="resolution" value="8.70 A"/>
    <property type="chains" value="t=1-111"/>
</dbReference>
<dbReference type="PDB" id="7PHA">
    <property type="method" value="EM"/>
    <property type="resolution" value="8.50 A"/>
    <property type="chains" value="t=1-111"/>
</dbReference>
<dbReference type="PDB" id="7PHB">
    <property type="method" value="EM"/>
    <property type="resolution" value="4.90 A"/>
    <property type="chains" value="t=1-111"/>
</dbReference>
<dbReference type="PDB" id="7PHC">
    <property type="method" value="EM"/>
    <property type="resolution" value="9.90 A"/>
    <property type="chains" value="t=1-111"/>
</dbReference>
<dbReference type="PDB" id="7PI8">
    <property type="method" value="EM"/>
    <property type="resolution" value="8.90 A"/>
    <property type="chains" value="t=1-111"/>
</dbReference>
<dbReference type="PDB" id="7PI9">
    <property type="method" value="EM"/>
    <property type="resolution" value="6.30 A"/>
    <property type="chains" value="t=1-111"/>
</dbReference>
<dbReference type="PDB" id="7PIA">
    <property type="method" value="EM"/>
    <property type="resolution" value="13.60 A"/>
    <property type="chains" value="t=1-111"/>
</dbReference>
<dbReference type="PDB" id="7PIB">
    <property type="method" value="EM"/>
    <property type="resolution" value="4.70 A"/>
    <property type="chains" value="t=1-111"/>
</dbReference>
<dbReference type="PDB" id="7PIC">
    <property type="method" value="EM"/>
    <property type="resolution" value="9.10 A"/>
    <property type="chains" value="t=1-111"/>
</dbReference>
<dbReference type="PDB" id="7PIO">
    <property type="method" value="EM"/>
    <property type="resolution" value="9.50 A"/>
    <property type="chains" value="t=1-111"/>
</dbReference>
<dbReference type="PDB" id="7PIP">
    <property type="method" value="EM"/>
    <property type="resolution" value="9.30 A"/>
    <property type="chains" value="t=1-111"/>
</dbReference>
<dbReference type="PDB" id="7PIQ">
    <property type="method" value="EM"/>
    <property type="resolution" value="9.70 A"/>
    <property type="chains" value="t=1-111"/>
</dbReference>
<dbReference type="PDB" id="7PIR">
    <property type="method" value="EM"/>
    <property type="resolution" value="12.10 A"/>
    <property type="chains" value="t=1-111"/>
</dbReference>
<dbReference type="PDB" id="7PIS">
    <property type="method" value="EM"/>
    <property type="resolution" value="15.00 A"/>
    <property type="chains" value="t=1-111"/>
</dbReference>
<dbReference type="PDB" id="7PIT">
    <property type="method" value="EM"/>
    <property type="resolution" value="5.70 A"/>
    <property type="chains" value="t=1-111"/>
</dbReference>
<dbReference type="PDB" id="8P7X">
    <property type="method" value="EM"/>
    <property type="resolution" value="3.03 A"/>
    <property type="chains" value="t=1-111"/>
</dbReference>
<dbReference type="PDB" id="8P7Y">
    <property type="method" value="EM"/>
    <property type="resolution" value="3.70 A"/>
    <property type="chains" value="t=1-111"/>
</dbReference>
<dbReference type="PDB" id="8P8B">
    <property type="method" value="EM"/>
    <property type="resolution" value="2.90 A"/>
    <property type="chains" value="t=1-111"/>
</dbReference>
<dbReference type="PDB" id="8P8V">
    <property type="method" value="EM"/>
    <property type="resolution" value="8.70 A"/>
    <property type="chains" value="t=1-111"/>
</dbReference>
<dbReference type="PDB" id="8P8W">
    <property type="method" value="EM"/>
    <property type="resolution" value="8.70 A"/>
    <property type="chains" value="t=1-111"/>
</dbReference>
<dbReference type="PDBsum" id="7OOD"/>
<dbReference type="PDBsum" id="7P6Z"/>
<dbReference type="PDBsum" id="7PAH"/>
<dbReference type="PDBsum" id="7PAI"/>
<dbReference type="PDBsum" id="7PAJ"/>
<dbReference type="PDBsum" id="7PAK"/>
<dbReference type="PDBsum" id="7PAL"/>
<dbReference type="PDBsum" id="7PAM"/>
<dbReference type="PDBsum" id="7PAN"/>
<dbReference type="PDBsum" id="7PAO"/>
<dbReference type="PDBsum" id="7PAQ"/>
<dbReference type="PDBsum" id="7PAR"/>
<dbReference type="PDBsum" id="7PAS"/>
<dbReference type="PDBsum" id="7PAT"/>
<dbReference type="PDBsum" id="7PAU"/>
<dbReference type="PDBsum" id="7PH9"/>
<dbReference type="PDBsum" id="7PHA"/>
<dbReference type="PDBsum" id="7PHB"/>
<dbReference type="PDBsum" id="7PHC"/>
<dbReference type="PDBsum" id="7PI8"/>
<dbReference type="PDBsum" id="7PI9"/>
<dbReference type="PDBsum" id="7PIA"/>
<dbReference type="PDBsum" id="7PIB"/>
<dbReference type="PDBsum" id="7PIC"/>
<dbReference type="PDBsum" id="7PIO"/>
<dbReference type="PDBsum" id="7PIP"/>
<dbReference type="PDBsum" id="7PIQ"/>
<dbReference type="PDBsum" id="7PIR"/>
<dbReference type="PDBsum" id="7PIS"/>
<dbReference type="PDBsum" id="7PIT"/>
<dbReference type="PDBsum" id="8P7X"/>
<dbReference type="PDBsum" id="8P7Y"/>
<dbReference type="PDBsum" id="8P8B"/>
<dbReference type="PDBsum" id="8P8V"/>
<dbReference type="PDBsum" id="8P8W"/>
<dbReference type="EMDB" id="EMD-13234"/>
<dbReference type="EMDB" id="EMD-13272"/>
<dbReference type="EMDB" id="EMD-13273"/>
<dbReference type="EMDB" id="EMD-13274"/>
<dbReference type="EMDB" id="EMD-13275"/>
<dbReference type="EMDB" id="EMD-13276"/>
<dbReference type="EMDB" id="EMD-13277"/>
<dbReference type="EMDB" id="EMD-13278"/>
<dbReference type="EMDB" id="EMD-13279"/>
<dbReference type="EMDB" id="EMD-13280"/>
<dbReference type="EMDB" id="EMD-13281"/>
<dbReference type="EMDB" id="EMD-13282"/>
<dbReference type="EMDB" id="EMD-13285"/>
<dbReference type="EMDB" id="EMD-13286"/>
<dbReference type="EMDB" id="EMD-13410"/>
<dbReference type="EMDB" id="EMD-13411"/>
<dbReference type="EMDB" id="EMD-13412"/>
<dbReference type="EMDB" id="EMD-13413"/>
<dbReference type="EMDB" id="EMD-13432"/>
<dbReference type="EMDB" id="EMD-13433"/>
<dbReference type="EMDB" id="EMD-13434"/>
<dbReference type="EMDB" id="EMD-13435"/>
<dbReference type="EMDB" id="EMD-13436"/>
<dbReference type="EMDB" id="EMD-13445"/>
<dbReference type="EMDB" id="EMD-13446"/>
<dbReference type="EMDB" id="EMD-13447"/>
<dbReference type="EMDB" id="EMD-13448"/>
<dbReference type="EMDB" id="EMD-13449"/>
<dbReference type="EMDB" id="EMD-13450"/>
<dbReference type="SMR" id="Q50307"/>
<dbReference type="IntAct" id="Q50307">
    <property type="interactions" value="6"/>
</dbReference>
<dbReference type="STRING" id="272634.MPN_176"/>
<dbReference type="EnsemblBacteria" id="AAB96303">
    <property type="protein sequence ID" value="AAB96303"/>
    <property type="gene ID" value="MPN_176"/>
</dbReference>
<dbReference type="GeneID" id="66609176"/>
<dbReference type="KEGG" id="mpn:MPN_176"/>
<dbReference type="PATRIC" id="fig|272634.6.peg.194"/>
<dbReference type="HOGENOM" id="CLU_093315_2_2_14"/>
<dbReference type="OrthoDB" id="9807419at2"/>
<dbReference type="BioCyc" id="MPNE272634:G1GJ3-287-MONOMER"/>
<dbReference type="Proteomes" id="UP000000808">
    <property type="component" value="Chromosome"/>
</dbReference>
<dbReference type="GO" id="GO:1990904">
    <property type="term" value="C:ribonucleoprotein complex"/>
    <property type="evidence" value="ECO:0007669"/>
    <property type="project" value="UniProtKB-KW"/>
</dbReference>
<dbReference type="GO" id="GO:0005840">
    <property type="term" value="C:ribosome"/>
    <property type="evidence" value="ECO:0007669"/>
    <property type="project" value="UniProtKB-KW"/>
</dbReference>
<dbReference type="GO" id="GO:0019843">
    <property type="term" value="F:rRNA binding"/>
    <property type="evidence" value="ECO:0007669"/>
    <property type="project" value="UniProtKB-UniRule"/>
</dbReference>
<dbReference type="GO" id="GO:0003735">
    <property type="term" value="F:structural constituent of ribosome"/>
    <property type="evidence" value="ECO:0007669"/>
    <property type="project" value="InterPro"/>
</dbReference>
<dbReference type="GO" id="GO:0006412">
    <property type="term" value="P:translation"/>
    <property type="evidence" value="ECO:0007669"/>
    <property type="project" value="UniProtKB-UniRule"/>
</dbReference>
<dbReference type="CDD" id="cd06089">
    <property type="entry name" value="KOW_RPL26"/>
    <property type="match status" value="1"/>
</dbReference>
<dbReference type="Gene3D" id="2.30.30.30">
    <property type="match status" value="1"/>
</dbReference>
<dbReference type="HAMAP" id="MF_01326_B">
    <property type="entry name" value="Ribosomal_uL24_B"/>
    <property type="match status" value="1"/>
</dbReference>
<dbReference type="InterPro" id="IPR005824">
    <property type="entry name" value="KOW"/>
</dbReference>
<dbReference type="InterPro" id="IPR014722">
    <property type="entry name" value="Rib_uL2_dom2"/>
</dbReference>
<dbReference type="InterPro" id="IPR003256">
    <property type="entry name" value="Ribosomal_uL24"/>
</dbReference>
<dbReference type="InterPro" id="IPR005825">
    <property type="entry name" value="Ribosomal_uL24_CS"/>
</dbReference>
<dbReference type="InterPro" id="IPR041988">
    <property type="entry name" value="Ribosomal_uL24_KOW"/>
</dbReference>
<dbReference type="InterPro" id="IPR008991">
    <property type="entry name" value="Translation_prot_SH3-like_sf"/>
</dbReference>
<dbReference type="NCBIfam" id="TIGR01079">
    <property type="entry name" value="rplX_bact"/>
    <property type="match status" value="1"/>
</dbReference>
<dbReference type="PANTHER" id="PTHR12903">
    <property type="entry name" value="MITOCHONDRIAL RIBOSOMAL PROTEIN L24"/>
    <property type="match status" value="1"/>
</dbReference>
<dbReference type="Pfam" id="PF00467">
    <property type="entry name" value="KOW"/>
    <property type="match status" value="1"/>
</dbReference>
<dbReference type="Pfam" id="PF17136">
    <property type="entry name" value="ribosomal_L24"/>
    <property type="match status" value="1"/>
</dbReference>
<dbReference type="SMART" id="SM00739">
    <property type="entry name" value="KOW"/>
    <property type="match status" value="1"/>
</dbReference>
<dbReference type="SUPFAM" id="SSF50104">
    <property type="entry name" value="Translation proteins SH3-like domain"/>
    <property type="match status" value="1"/>
</dbReference>
<dbReference type="PROSITE" id="PS01108">
    <property type="entry name" value="RIBOSOMAL_L24"/>
    <property type="match status" value="1"/>
</dbReference>
<proteinExistence type="evidence at protein level"/>
<reference key="1">
    <citation type="journal article" date="1996" name="Nucleic Acids Res.">
        <title>Sequence analysis of 56 kb from the genome of the bacterium Mycoplasma pneumoniae comprising the dnaA region, the atp operon and a cluster of ribosomal protein genes.</title>
        <authorList>
            <person name="Hilbert H."/>
            <person name="Himmelreich R."/>
            <person name="Plagens H."/>
            <person name="Herrmann R."/>
        </authorList>
    </citation>
    <scope>NUCLEOTIDE SEQUENCE [GENOMIC DNA]</scope>
    <source>
        <strain>ATCC 29342 / M129 / Subtype 1</strain>
    </source>
</reference>
<reference key="2">
    <citation type="journal article" date="1996" name="Nucleic Acids Res.">
        <title>Complete sequence analysis of the genome of the bacterium Mycoplasma pneumoniae.</title>
        <authorList>
            <person name="Himmelreich R."/>
            <person name="Hilbert H."/>
            <person name="Plagens H."/>
            <person name="Pirkl E."/>
            <person name="Li B.-C."/>
            <person name="Herrmann R."/>
        </authorList>
    </citation>
    <scope>NUCLEOTIDE SEQUENCE [LARGE SCALE GENOMIC DNA]</scope>
    <source>
        <strain>ATCC 29342 / M129 / Subtype 1</strain>
    </source>
</reference>
<accession>Q50307</accession>
<gene>
    <name evidence="1" type="primary">rplX</name>
    <name type="ordered locus">MPN_176</name>
    <name type="ORF">MP655</name>
</gene>
<feature type="chain" id="PRO_0000130682" description="Large ribosomal subunit protein uL24">
    <location>
        <begin position="1"/>
        <end position="111"/>
    </location>
</feature>
<feature type="region of interest" description="Disordered" evidence="2">
    <location>
        <begin position="43"/>
        <end position="62"/>
    </location>
</feature>
<feature type="strand" evidence="5">
    <location>
        <begin position="6"/>
        <end position="12"/>
    </location>
</feature>
<feature type="strand" evidence="5">
    <location>
        <begin position="14"/>
        <end position="17"/>
    </location>
</feature>
<feature type="strand" evidence="5">
    <location>
        <begin position="22"/>
        <end position="28"/>
    </location>
</feature>
<feature type="turn" evidence="5">
    <location>
        <begin position="29"/>
        <end position="32"/>
    </location>
</feature>
<feature type="strand" evidence="5">
    <location>
        <begin position="33"/>
        <end position="36"/>
    </location>
</feature>
<feature type="turn" evidence="5">
    <location>
        <begin position="53"/>
        <end position="57"/>
    </location>
</feature>
<feature type="helix" evidence="5">
    <location>
        <begin position="71"/>
        <end position="73"/>
    </location>
</feature>
<feature type="strand" evidence="5">
    <location>
        <begin position="74"/>
        <end position="77"/>
    </location>
</feature>
<feature type="strand" evidence="5">
    <location>
        <begin position="80"/>
        <end position="83"/>
    </location>
</feature>
<feature type="turn" evidence="5">
    <location>
        <begin position="95"/>
        <end position="97"/>
    </location>
</feature>
<feature type="strand" evidence="4">
    <location>
        <begin position="98"/>
        <end position="100"/>
    </location>
</feature>
<feature type="strand" evidence="5">
    <location>
        <begin position="103"/>
        <end position="107"/>
    </location>
</feature>
<sequence length="111" mass="12433">MQRIKKGDKVVVITGKNKGGSGIVLKIMPARQQAIVEGLNKVTRHKKKDQTTKRAAKQSTGKVQQEAPIFLSKLALFDQKAKQQTIGKIKYVMDPKTNKKTRVFKKSNNTL</sequence>
<evidence type="ECO:0000255" key="1">
    <source>
        <dbReference type="HAMAP-Rule" id="MF_01326"/>
    </source>
</evidence>
<evidence type="ECO:0000256" key="2">
    <source>
        <dbReference type="SAM" id="MobiDB-lite"/>
    </source>
</evidence>
<evidence type="ECO:0000305" key="3"/>
<evidence type="ECO:0007829" key="4">
    <source>
        <dbReference type="PDB" id="7OOD"/>
    </source>
</evidence>
<evidence type="ECO:0007829" key="5">
    <source>
        <dbReference type="PDB" id="8P8B"/>
    </source>
</evidence>
<name>RL24_MYCPN</name>